<reference key="1">
    <citation type="journal article" date="1993" name="J. Bacteriol.">
        <title>Characterization of the baiH gene encoding a bile acid-inducible NADH:flavin oxidoreductase from Eubacterium sp. strain VPI 12708.</title>
        <authorList>
            <person name="Franklund C.V."/>
            <person name="Baron S.F."/>
            <person name="Hylemon P.B."/>
        </authorList>
    </citation>
    <scope>NUCLEOTIDE SEQUENCE [GENOMIC DNA]</scope>
    <scope>PROTEIN SEQUENCE OF 1-25</scope>
    <scope>FUNCTION AS A FLAVIN OXIDOREDUCTASE</scope>
    <scope>COFACTOR</scope>
    <scope>ACTIVITY REGULATION</scope>
    <scope>SUBUNIT</scope>
    <scope>INDUCTION</scope>
    <source>
        <strain>JCM 10418 / VPI 12708</strain>
    </source>
</reference>
<reference key="2">
    <citation type="journal article" date="1995" name="Biochim. Biophys. Acta">
        <title>Expression of the bile acid-inducible NADH:flavin oxidoreductase gene of Eubacterium sp. VPI 12708 in Escherichia coli.</title>
        <authorList>
            <person name="Baron S.F."/>
            <person name="Hylemon P.B."/>
        </authorList>
    </citation>
    <scope>FUNCTION AS A FLAVIN OXIDOREDUCTASE</scope>
    <scope>COFACTOR</scope>
    <scope>SUBUNIT</scope>
    <source>
        <strain>JCM 10418 / VPI 12708</strain>
    </source>
</reference>
<reference key="3">
    <citation type="journal article" date="2008" name="Biochim. Biophys. Acta">
        <title>Clostridium scindens baiCD and baiH genes encode stereo-specific 7alpha/7beta-hydroxy-3-oxo-delta4-cholenoic acid oxidoreductases.</title>
        <authorList>
            <person name="Kang D.J."/>
            <person name="Ridlon J.M."/>
            <person name="Moore D.R. II"/>
            <person name="Barnes S."/>
            <person name="Hylemon P.B."/>
        </authorList>
    </citation>
    <scope>FUNCTION</scope>
    <scope>CATALYTIC ACTIVITY</scope>
    <scope>PATHWAY</scope>
    <source>
        <strain>JCM 10418 / VPI 12708</strain>
    </source>
</reference>
<proteinExistence type="evidence at protein level"/>
<comment type="function">
    <text evidence="3 4 5">NADH-dependent flavin oxidoreductase (PubMed:18047844, PubMed:7599167, PubMed:8491719). Stereo-specific NAD(H)-dependent 3-oxo-delta4-cholenoic acid oxidoreductase involved in bile acid 7beta-dehydroxylation (PubMed:18047844).</text>
</comment>
<comment type="catalytic activity">
    <reaction evidence="3">
        <text>7beta-hydroxy-3-oxochol-24-oyl-CoA + NAD(+) = 7beta-hydroxy-3-oxochol-4-en-24-oyl-CoA + NADH + H(+)</text>
        <dbReference type="Rhea" id="RHEA:56668"/>
        <dbReference type="ChEBI" id="CHEBI:15378"/>
        <dbReference type="ChEBI" id="CHEBI:57540"/>
        <dbReference type="ChEBI" id="CHEBI:57945"/>
        <dbReference type="ChEBI" id="CHEBI:140637"/>
        <dbReference type="ChEBI" id="CHEBI:140638"/>
        <dbReference type="EC" id="1.3.1.116"/>
    </reaction>
</comment>
<comment type="cofactor">
    <cofactor evidence="2">
        <name>FMN</name>
        <dbReference type="ChEBI" id="CHEBI:58210"/>
    </cofactor>
</comment>
<comment type="cofactor">
    <cofactor evidence="4 5">
        <name>FAD</name>
        <dbReference type="ChEBI" id="CHEBI:57692"/>
    </cofactor>
</comment>
<comment type="cofactor">
    <cofactor evidence="2">
        <name>[4Fe-4S] cluster</name>
        <dbReference type="ChEBI" id="CHEBI:49883"/>
    </cofactor>
</comment>
<comment type="activity regulation">
    <text evidence="5">Activity is inhibited by sulfhydryl-reactive compounds, acriflavine, o-phenanthroline and EDTA.</text>
</comment>
<comment type="pathway">
    <text evidence="8">Lipid metabolism; bile acid degradation.</text>
</comment>
<comment type="subunit">
    <text evidence="4 5">Homotrimer.</text>
</comment>
<comment type="induction">
    <text evidence="5">Induced by cholate.</text>
</comment>
<comment type="similarity">
    <text evidence="7">In the N-terminal section; belongs to the NADH:flavin oxidoreductase/NADH oxidase family.</text>
</comment>
<protein>
    <recommendedName>
        <fullName evidence="7">7-beta-hydroxy-3-oxochol-24-oyl-CoA 4-desaturase</fullName>
        <ecNumber evidence="3">1.3.1.116</ecNumber>
    </recommendedName>
    <alternativeName>
        <fullName evidence="6">NADH-dependent flavin oxidoreductase</fullName>
    </alternativeName>
    <alternativeName>
        <fullName evidence="6">NADH:flavin oxidoreductase</fullName>
        <shortName evidence="6">NADH:FOR</shortName>
    </alternativeName>
</protein>
<keyword id="KW-0004">4Fe-4S</keyword>
<keyword id="KW-0088">Bile acid catabolism</keyword>
<keyword id="KW-0903">Direct protein sequencing</keyword>
<keyword id="KW-0274">FAD</keyword>
<keyword id="KW-0285">Flavoprotein</keyword>
<keyword id="KW-0288">FMN</keyword>
<keyword id="KW-0408">Iron</keyword>
<keyword id="KW-0411">Iron-sulfur</keyword>
<keyword id="KW-0442">Lipid degradation</keyword>
<keyword id="KW-0443">Lipid metabolism</keyword>
<keyword id="KW-0479">Metal-binding</keyword>
<keyword id="KW-0520">NAD</keyword>
<keyword id="KW-0560">Oxidoreductase</keyword>
<keyword id="KW-0753">Steroid metabolism</keyword>
<organism>
    <name type="scientific">Clostridium scindens (strain JCM 10418 / VPI 12708)</name>
    <dbReference type="NCBI Taxonomy" id="29347"/>
    <lineage>
        <taxon>Bacteria</taxon>
        <taxon>Bacillati</taxon>
        <taxon>Bacillota</taxon>
        <taxon>Clostridia</taxon>
        <taxon>Lachnospirales</taxon>
        <taxon>Lachnospiraceae</taxon>
    </lineage>
</organism>
<name>BAIH_CLOSV</name>
<accession>P32370</accession>
<feature type="chain" id="PRO_0000194470" description="7-beta-hydroxy-3-oxochol-24-oyl-CoA 4-desaturase">
    <location>
        <begin position="1"/>
        <end position="661"/>
    </location>
</feature>
<feature type="active site" description="Proton donor" evidence="2">
    <location>
        <position position="173"/>
    </location>
</feature>
<feature type="binding site" evidence="2">
    <location>
        <position position="104"/>
    </location>
    <ligand>
        <name>FMN</name>
        <dbReference type="ChEBI" id="CHEBI:58210"/>
    </ligand>
</feature>
<feature type="binding site" evidence="1">
    <location>
        <begin position="168"/>
        <end position="171"/>
    </location>
    <ligand>
        <name>substrate</name>
    </ligand>
</feature>
<feature type="binding site" evidence="2">
    <location>
        <position position="222"/>
    </location>
    <ligand>
        <name>FMN</name>
        <dbReference type="ChEBI" id="CHEBI:58210"/>
    </ligand>
</feature>
<feature type="binding site" evidence="2">
    <location>
        <position position="298"/>
    </location>
    <ligand>
        <name>FMN</name>
        <dbReference type="ChEBI" id="CHEBI:58210"/>
    </ligand>
</feature>
<feature type="binding site" evidence="2">
    <location>
        <begin position="320"/>
        <end position="321"/>
    </location>
    <ligand>
        <name>FMN</name>
        <dbReference type="ChEBI" id="CHEBI:58210"/>
    </ligand>
</feature>
<feature type="binding site" evidence="2">
    <location>
        <position position="344"/>
    </location>
    <ligand>
        <name>[4Fe-4S] cluster</name>
        <dbReference type="ChEBI" id="CHEBI:49883"/>
    </ligand>
</feature>
<feature type="binding site" evidence="2">
    <location>
        <position position="347"/>
    </location>
    <ligand>
        <name>[4Fe-4S] cluster</name>
        <dbReference type="ChEBI" id="CHEBI:49883"/>
    </ligand>
</feature>
<feature type="binding site" evidence="2">
    <location>
        <position position="351"/>
    </location>
    <ligand>
        <name>[4Fe-4S] cluster</name>
        <dbReference type="ChEBI" id="CHEBI:49883"/>
    </ligand>
</feature>
<feature type="binding site" evidence="2">
    <location>
        <position position="363"/>
    </location>
    <ligand>
        <name>[4Fe-4S] cluster</name>
        <dbReference type="ChEBI" id="CHEBI:49883"/>
    </ligand>
</feature>
<feature type="binding site" evidence="2">
    <location>
        <position position="394"/>
    </location>
    <ligand>
        <name>FAD</name>
        <dbReference type="ChEBI" id="CHEBI:57692"/>
    </ligand>
</feature>
<feature type="binding site" evidence="2">
    <location>
        <position position="413"/>
    </location>
    <ligand>
        <name>FAD</name>
        <dbReference type="ChEBI" id="CHEBI:57692"/>
    </ligand>
</feature>
<feature type="binding site" evidence="2">
    <location>
        <position position="421"/>
    </location>
    <ligand>
        <name>FAD</name>
        <dbReference type="ChEBI" id="CHEBI:57692"/>
    </ligand>
</feature>
<feature type="binding site" evidence="2">
    <location>
        <position position="431"/>
    </location>
    <ligand>
        <name>FAD</name>
        <dbReference type="ChEBI" id="CHEBI:57692"/>
    </ligand>
</feature>
<feature type="binding site" evidence="2">
    <location>
        <position position="458"/>
    </location>
    <ligand>
        <name>FAD</name>
        <dbReference type="ChEBI" id="CHEBI:57692"/>
    </ligand>
</feature>
<feature type="sequence conflict" description="In Ref. 1; AA sequence." evidence="7" ref="1">
    <original>R</original>
    <variation>F</variation>
    <location>
        <position position="22"/>
    </location>
</feature>
<evidence type="ECO:0000250" key="1"/>
<evidence type="ECO:0000250" key="2">
    <source>
        <dbReference type="UniProtKB" id="P42593"/>
    </source>
</evidence>
<evidence type="ECO:0000269" key="3">
    <source>
    </source>
</evidence>
<evidence type="ECO:0000269" key="4">
    <source>
    </source>
</evidence>
<evidence type="ECO:0000269" key="5">
    <source>
    </source>
</evidence>
<evidence type="ECO:0000303" key="6">
    <source>
    </source>
</evidence>
<evidence type="ECO:0000305" key="7"/>
<evidence type="ECO:0000305" key="8">
    <source>
    </source>
</evidence>
<gene>
    <name evidence="6" type="primary">baiH</name>
</gene>
<dbReference type="EC" id="1.3.1.116" evidence="3"/>
<dbReference type="EMBL" id="U57489">
    <property type="protein sequence ID" value="AAC45417.1"/>
    <property type="molecule type" value="Genomic_DNA"/>
</dbReference>
<dbReference type="SMR" id="P32370"/>
<dbReference type="KEGG" id="ag:AAC45417"/>
<dbReference type="BioCyc" id="MetaCyc:MONOMER-19700"/>
<dbReference type="BRENDA" id="1.3.1.116">
    <property type="organism ID" value="1513"/>
</dbReference>
<dbReference type="BRENDA" id="1.5.1.36">
    <property type="organism ID" value="1513"/>
</dbReference>
<dbReference type="UniPathway" id="UPA00279"/>
<dbReference type="GO" id="GO:0005737">
    <property type="term" value="C:cytoplasm"/>
    <property type="evidence" value="ECO:0000305"/>
    <property type="project" value="UniProt"/>
</dbReference>
<dbReference type="GO" id="GO:0051539">
    <property type="term" value="F:4 iron, 4 sulfur cluster binding"/>
    <property type="evidence" value="ECO:0007669"/>
    <property type="project" value="UniProtKB-KW"/>
</dbReference>
<dbReference type="GO" id="GO:0010181">
    <property type="term" value="F:FMN binding"/>
    <property type="evidence" value="ECO:0007669"/>
    <property type="project" value="InterPro"/>
</dbReference>
<dbReference type="GO" id="GO:0046872">
    <property type="term" value="F:metal ion binding"/>
    <property type="evidence" value="ECO:0007669"/>
    <property type="project" value="UniProtKB-KW"/>
</dbReference>
<dbReference type="GO" id="GO:0016620">
    <property type="term" value="F:oxidoreductase activity, acting on the aldehyde or oxo group of donors, NAD or NADP as acceptor"/>
    <property type="evidence" value="ECO:0000314"/>
    <property type="project" value="UniProt"/>
</dbReference>
<dbReference type="GO" id="GO:0030573">
    <property type="term" value="P:bile acid catabolic process"/>
    <property type="evidence" value="ECO:0000314"/>
    <property type="project" value="UniProt"/>
</dbReference>
<dbReference type="GO" id="GO:0016042">
    <property type="term" value="P:lipid catabolic process"/>
    <property type="evidence" value="ECO:0007669"/>
    <property type="project" value="UniProtKB-KW"/>
</dbReference>
<dbReference type="CDD" id="cd02803">
    <property type="entry name" value="OYE_like_FMN_family"/>
    <property type="match status" value="1"/>
</dbReference>
<dbReference type="Gene3D" id="3.20.20.70">
    <property type="entry name" value="Aldolase class I"/>
    <property type="match status" value="1"/>
</dbReference>
<dbReference type="Gene3D" id="3.50.50.60">
    <property type="entry name" value="FAD/NAD(P)-binding domain"/>
    <property type="match status" value="1"/>
</dbReference>
<dbReference type="Gene3D" id="3.40.50.720">
    <property type="entry name" value="NAD(P)-binding Rossmann-like Domain"/>
    <property type="match status" value="1"/>
</dbReference>
<dbReference type="InterPro" id="IPR013785">
    <property type="entry name" value="Aldolase_TIM"/>
</dbReference>
<dbReference type="InterPro" id="IPR036188">
    <property type="entry name" value="FAD/NAD-bd_sf"/>
</dbReference>
<dbReference type="InterPro" id="IPR023753">
    <property type="entry name" value="FAD/NAD-binding_dom"/>
</dbReference>
<dbReference type="InterPro" id="IPR051793">
    <property type="entry name" value="NADH:flavin_oxidoreductase"/>
</dbReference>
<dbReference type="InterPro" id="IPR001155">
    <property type="entry name" value="OxRdtase_FMN_N"/>
</dbReference>
<dbReference type="PANTHER" id="PTHR42917">
    <property type="entry name" value="2,4-DIENOYL-COA REDUCTASE"/>
    <property type="match status" value="1"/>
</dbReference>
<dbReference type="PANTHER" id="PTHR42917:SF2">
    <property type="entry name" value="2,4-DIENOYL-COA REDUCTASE [(2E)-ENOYL-COA-PRODUCING]"/>
    <property type="match status" value="1"/>
</dbReference>
<dbReference type="Pfam" id="PF00724">
    <property type="entry name" value="Oxidored_FMN"/>
    <property type="match status" value="1"/>
</dbReference>
<dbReference type="Pfam" id="PF07992">
    <property type="entry name" value="Pyr_redox_2"/>
    <property type="match status" value="1"/>
</dbReference>
<dbReference type="PRINTS" id="PR00368">
    <property type="entry name" value="FADPNR"/>
</dbReference>
<dbReference type="PRINTS" id="PR00411">
    <property type="entry name" value="PNDRDTASEI"/>
</dbReference>
<dbReference type="SUPFAM" id="SSF51905">
    <property type="entry name" value="FAD/NAD(P)-binding domain"/>
    <property type="match status" value="1"/>
</dbReference>
<dbReference type="SUPFAM" id="SSF51395">
    <property type="entry name" value="FMN-linked oxidoreductases"/>
    <property type="match status" value="1"/>
</dbReference>
<sequence>MDMKHSRLFSPLQIGSLTLSNRVGMAPMSMDYEAADGTVPKRLADVFVRRAEGGTGYVMIDAVTIDSKYPYMGNTTALDRDELVPQFKEFADRVKEAGSTLVPQIIHPGPESVCGYRHIAPLGPSANTNANCHVSRSISIDEIHDIIKQFGQAARRAEEAGCGAISLHCAHAYMLPGSFLSPLRNKRMDEYGGSLDNRARFVIEMIEEARRNVSPDFPIFLRISGDERMVGGNSLEDMLYLAPKFEAAGVSMLEVSGGTQYEGLEHIIPCQNKSRGVNVYEASEIKKVVGIPVYAVGKINDIRYAAEIVERGLVDGVAMGRPLLADPDLCKKAVEGQFDEITPCASCGGSCISRSEAAPECHCHINPRLGREYEFPDVPAEKSKKVLVIGAGPGGMMAAVTAAERGHDVTVWEADDKIGGQLNLAVVAPGKQEMTQWMVHLNYRAKKAGVKFEFNKEATAEDVKALAPEAVIVATGAKPLVPPIKGTQDYPVLTAHDFLRGKFVIPKGRVCVLGGGAVACETAETALENARPNSYTRGYDASIGDIDVTLVEMLPQLLTGVCAPNREPLIRKLKSKGVHINVNTKIMEVTDHEVKVQRQDGTQEWLEGFDYVLFGLGSRNYDPLSETLKEFVPEVHVIGDAVRARQASYAMWEGFEKAYSL</sequence>